<proteinExistence type="inferred from homology"/>
<gene>
    <name evidence="1" type="primary">panC</name>
    <name type="ordered locus">PST_3297</name>
</gene>
<reference key="1">
    <citation type="journal article" date="2008" name="Proc. Natl. Acad. Sci. U.S.A.">
        <title>Nitrogen fixation island and rhizosphere competence traits in the genome of root-associated Pseudomonas stutzeri A1501.</title>
        <authorList>
            <person name="Yan Y."/>
            <person name="Yang J."/>
            <person name="Dou Y."/>
            <person name="Chen M."/>
            <person name="Ping S."/>
            <person name="Peng J."/>
            <person name="Lu W."/>
            <person name="Zhang W."/>
            <person name="Yao Z."/>
            <person name="Li H."/>
            <person name="Liu W."/>
            <person name="He S."/>
            <person name="Geng L."/>
            <person name="Zhang X."/>
            <person name="Yang F."/>
            <person name="Yu H."/>
            <person name="Zhan Y."/>
            <person name="Li D."/>
            <person name="Lin Z."/>
            <person name="Wang Y."/>
            <person name="Elmerich C."/>
            <person name="Lin M."/>
            <person name="Jin Q."/>
        </authorList>
    </citation>
    <scope>NUCLEOTIDE SEQUENCE [LARGE SCALE GENOMIC DNA]</scope>
    <source>
        <strain>A1501</strain>
    </source>
</reference>
<comment type="function">
    <text evidence="1">Catalyzes the condensation of pantoate with beta-alanine in an ATP-dependent reaction via a pantoyl-adenylate intermediate.</text>
</comment>
<comment type="catalytic activity">
    <reaction evidence="1">
        <text>(R)-pantoate + beta-alanine + ATP = (R)-pantothenate + AMP + diphosphate + H(+)</text>
        <dbReference type="Rhea" id="RHEA:10912"/>
        <dbReference type="ChEBI" id="CHEBI:15378"/>
        <dbReference type="ChEBI" id="CHEBI:15980"/>
        <dbReference type="ChEBI" id="CHEBI:29032"/>
        <dbReference type="ChEBI" id="CHEBI:30616"/>
        <dbReference type="ChEBI" id="CHEBI:33019"/>
        <dbReference type="ChEBI" id="CHEBI:57966"/>
        <dbReference type="ChEBI" id="CHEBI:456215"/>
        <dbReference type="EC" id="6.3.2.1"/>
    </reaction>
</comment>
<comment type="pathway">
    <text evidence="1">Cofactor biosynthesis; (R)-pantothenate biosynthesis; (R)-pantothenate from (R)-pantoate and beta-alanine: step 1/1.</text>
</comment>
<comment type="subunit">
    <text evidence="1">Homodimer.</text>
</comment>
<comment type="subcellular location">
    <subcellularLocation>
        <location evidence="1">Cytoplasm</location>
    </subcellularLocation>
</comment>
<comment type="miscellaneous">
    <text evidence="1">The reaction proceeds by a bi uni uni bi ping pong mechanism.</text>
</comment>
<comment type="similarity">
    <text evidence="1">Belongs to the pantothenate synthetase family.</text>
</comment>
<name>PANC_STUS1</name>
<evidence type="ECO:0000255" key="1">
    <source>
        <dbReference type="HAMAP-Rule" id="MF_00158"/>
    </source>
</evidence>
<accession>A4VPM7</accession>
<sequence length="286" mass="31007">MNVVKNIADLRAAVARARGEGKRIGFVPTMGNLHAGHIALVKKAGQRADFVVASIFVNPLQFGPNEDLDNYPRTLAADQEKLFDAGCHLLFAPSVEEMYPHGQANQTIVRVPGVSEGLCGGSRPGHFDGVSTVVSKLFNMVLPDLAVFGQKDFQQLAVIRTMVRDLNMPVQILSEPTVRADDGLALSSRNGYLSADERATAPVLYRTLNQLRDALQGGRRDLPALIDEGLEALRNAGLRPDYLDIRNAIDLQPVTDASSELVILAAAYLGKTRLIDNLLVDLRTSA</sequence>
<organism>
    <name type="scientific">Stutzerimonas stutzeri (strain A1501)</name>
    <name type="common">Pseudomonas stutzeri</name>
    <dbReference type="NCBI Taxonomy" id="379731"/>
    <lineage>
        <taxon>Bacteria</taxon>
        <taxon>Pseudomonadati</taxon>
        <taxon>Pseudomonadota</taxon>
        <taxon>Gammaproteobacteria</taxon>
        <taxon>Pseudomonadales</taxon>
        <taxon>Pseudomonadaceae</taxon>
        <taxon>Stutzerimonas</taxon>
    </lineage>
</organism>
<protein>
    <recommendedName>
        <fullName evidence="1">Pantothenate synthetase</fullName>
        <shortName evidence="1">PS</shortName>
        <ecNumber evidence="1">6.3.2.1</ecNumber>
    </recommendedName>
    <alternativeName>
        <fullName evidence="1">Pantoate--beta-alanine ligase</fullName>
    </alternativeName>
    <alternativeName>
        <fullName evidence="1">Pantoate-activating enzyme</fullName>
    </alternativeName>
</protein>
<keyword id="KW-0067">ATP-binding</keyword>
<keyword id="KW-0963">Cytoplasm</keyword>
<keyword id="KW-0436">Ligase</keyword>
<keyword id="KW-0547">Nucleotide-binding</keyword>
<keyword id="KW-0566">Pantothenate biosynthesis</keyword>
<keyword id="KW-1185">Reference proteome</keyword>
<dbReference type="EC" id="6.3.2.1" evidence="1"/>
<dbReference type="EMBL" id="CP000304">
    <property type="protein sequence ID" value="ABP80928.1"/>
    <property type="molecule type" value="Genomic_DNA"/>
</dbReference>
<dbReference type="RefSeq" id="WP_011914359.1">
    <property type="nucleotide sequence ID" value="NC_009434.1"/>
</dbReference>
<dbReference type="SMR" id="A4VPM7"/>
<dbReference type="KEGG" id="psa:PST_3297"/>
<dbReference type="eggNOG" id="COG0414">
    <property type="taxonomic scope" value="Bacteria"/>
</dbReference>
<dbReference type="HOGENOM" id="CLU_047148_0_0_6"/>
<dbReference type="UniPathway" id="UPA00028">
    <property type="reaction ID" value="UER00005"/>
</dbReference>
<dbReference type="Proteomes" id="UP000000233">
    <property type="component" value="Chromosome"/>
</dbReference>
<dbReference type="GO" id="GO:0005829">
    <property type="term" value="C:cytosol"/>
    <property type="evidence" value="ECO:0007669"/>
    <property type="project" value="TreeGrafter"/>
</dbReference>
<dbReference type="GO" id="GO:0005524">
    <property type="term" value="F:ATP binding"/>
    <property type="evidence" value="ECO:0007669"/>
    <property type="project" value="UniProtKB-KW"/>
</dbReference>
<dbReference type="GO" id="GO:0004592">
    <property type="term" value="F:pantoate-beta-alanine ligase activity"/>
    <property type="evidence" value="ECO:0007669"/>
    <property type="project" value="UniProtKB-UniRule"/>
</dbReference>
<dbReference type="GO" id="GO:0015940">
    <property type="term" value="P:pantothenate biosynthetic process"/>
    <property type="evidence" value="ECO:0007669"/>
    <property type="project" value="UniProtKB-UniRule"/>
</dbReference>
<dbReference type="CDD" id="cd00560">
    <property type="entry name" value="PanC"/>
    <property type="match status" value="1"/>
</dbReference>
<dbReference type="FunFam" id="3.30.1300.10:FF:000001">
    <property type="entry name" value="Pantothenate synthetase"/>
    <property type="match status" value="1"/>
</dbReference>
<dbReference type="FunFam" id="3.40.50.620:FF:000013">
    <property type="entry name" value="Pantothenate synthetase"/>
    <property type="match status" value="1"/>
</dbReference>
<dbReference type="Gene3D" id="3.40.50.620">
    <property type="entry name" value="HUPs"/>
    <property type="match status" value="1"/>
</dbReference>
<dbReference type="Gene3D" id="3.30.1300.10">
    <property type="entry name" value="Pantoate-beta-alanine ligase, C-terminal domain"/>
    <property type="match status" value="1"/>
</dbReference>
<dbReference type="HAMAP" id="MF_00158">
    <property type="entry name" value="PanC"/>
    <property type="match status" value="1"/>
</dbReference>
<dbReference type="InterPro" id="IPR003721">
    <property type="entry name" value="Pantoate_ligase"/>
</dbReference>
<dbReference type="InterPro" id="IPR042176">
    <property type="entry name" value="Pantoate_ligase_C"/>
</dbReference>
<dbReference type="InterPro" id="IPR014729">
    <property type="entry name" value="Rossmann-like_a/b/a_fold"/>
</dbReference>
<dbReference type="NCBIfam" id="TIGR00018">
    <property type="entry name" value="panC"/>
    <property type="match status" value="1"/>
</dbReference>
<dbReference type="PANTHER" id="PTHR21299">
    <property type="entry name" value="CYTIDYLATE KINASE/PANTOATE-BETA-ALANINE LIGASE"/>
    <property type="match status" value="1"/>
</dbReference>
<dbReference type="PANTHER" id="PTHR21299:SF1">
    <property type="entry name" value="PANTOATE--BETA-ALANINE LIGASE"/>
    <property type="match status" value="1"/>
</dbReference>
<dbReference type="Pfam" id="PF02569">
    <property type="entry name" value="Pantoate_ligase"/>
    <property type="match status" value="1"/>
</dbReference>
<dbReference type="SUPFAM" id="SSF52374">
    <property type="entry name" value="Nucleotidylyl transferase"/>
    <property type="match status" value="1"/>
</dbReference>
<feature type="chain" id="PRO_0000305517" description="Pantothenate synthetase">
    <location>
        <begin position="1"/>
        <end position="286"/>
    </location>
</feature>
<feature type="active site" description="Proton donor" evidence="1">
    <location>
        <position position="37"/>
    </location>
</feature>
<feature type="binding site" evidence="1">
    <location>
        <begin position="30"/>
        <end position="37"/>
    </location>
    <ligand>
        <name>ATP</name>
        <dbReference type="ChEBI" id="CHEBI:30616"/>
    </ligand>
</feature>
<feature type="binding site" evidence="1">
    <location>
        <position position="61"/>
    </location>
    <ligand>
        <name>(R)-pantoate</name>
        <dbReference type="ChEBI" id="CHEBI:15980"/>
    </ligand>
</feature>
<feature type="binding site" evidence="1">
    <location>
        <position position="61"/>
    </location>
    <ligand>
        <name>beta-alanine</name>
        <dbReference type="ChEBI" id="CHEBI:57966"/>
    </ligand>
</feature>
<feature type="binding site" evidence="1">
    <location>
        <begin position="149"/>
        <end position="152"/>
    </location>
    <ligand>
        <name>ATP</name>
        <dbReference type="ChEBI" id="CHEBI:30616"/>
    </ligand>
</feature>
<feature type="binding site" evidence="1">
    <location>
        <position position="155"/>
    </location>
    <ligand>
        <name>(R)-pantoate</name>
        <dbReference type="ChEBI" id="CHEBI:15980"/>
    </ligand>
</feature>
<feature type="binding site" evidence="1">
    <location>
        <position position="178"/>
    </location>
    <ligand>
        <name>ATP</name>
        <dbReference type="ChEBI" id="CHEBI:30616"/>
    </ligand>
</feature>
<feature type="binding site" evidence="1">
    <location>
        <begin position="186"/>
        <end position="189"/>
    </location>
    <ligand>
        <name>ATP</name>
        <dbReference type="ChEBI" id="CHEBI:30616"/>
    </ligand>
</feature>